<gene>
    <name evidence="1" type="primary">clpX</name>
    <name type="ordered locus">VC_1921</name>
</gene>
<dbReference type="EMBL" id="AE003852">
    <property type="protein sequence ID" value="AAF95069.1"/>
    <property type="molecule type" value="Genomic_DNA"/>
</dbReference>
<dbReference type="PIR" id="F82139">
    <property type="entry name" value="F82139"/>
</dbReference>
<dbReference type="RefSeq" id="NP_231555.1">
    <property type="nucleotide sequence ID" value="NC_002505.1"/>
</dbReference>
<dbReference type="RefSeq" id="WP_000130332.1">
    <property type="nucleotide sequence ID" value="NZ_LT906614.1"/>
</dbReference>
<dbReference type="SMR" id="Q9KQS7"/>
<dbReference type="STRING" id="243277.VC_1921"/>
<dbReference type="DNASU" id="2613550"/>
<dbReference type="EnsemblBacteria" id="AAF95069">
    <property type="protein sequence ID" value="AAF95069"/>
    <property type="gene ID" value="VC_1921"/>
</dbReference>
<dbReference type="GeneID" id="94013424"/>
<dbReference type="KEGG" id="vch:VC_1921"/>
<dbReference type="PATRIC" id="fig|243277.26.peg.1838"/>
<dbReference type="eggNOG" id="COG1219">
    <property type="taxonomic scope" value="Bacteria"/>
</dbReference>
<dbReference type="HOGENOM" id="CLU_014218_8_2_6"/>
<dbReference type="Proteomes" id="UP000000584">
    <property type="component" value="Chromosome 1"/>
</dbReference>
<dbReference type="GO" id="GO:0009376">
    <property type="term" value="C:HslUV protease complex"/>
    <property type="evidence" value="ECO:0000318"/>
    <property type="project" value="GO_Central"/>
</dbReference>
<dbReference type="GO" id="GO:0005524">
    <property type="term" value="F:ATP binding"/>
    <property type="evidence" value="ECO:0000318"/>
    <property type="project" value="GO_Central"/>
</dbReference>
<dbReference type="GO" id="GO:0016887">
    <property type="term" value="F:ATP hydrolysis activity"/>
    <property type="evidence" value="ECO:0000318"/>
    <property type="project" value="GO_Central"/>
</dbReference>
<dbReference type="GO" id="GO:0140662">
    <property type="term" value="F:ATP-dependent protein folding chaperone"/>
    <property type="evidence" value="ECO:0007669"/>
    <property type="project" value="InterPro"/>
</dbReference>
<dbReference type="GO" id="GO:0046983">
    <property type="term" value="F:protein dimerization activity"/>
    <property type="evidence" value="ECO:0007669"/>
    <property type="project" value="InterPro"/>
</dbReference>
<dbReference type="GO" id="GO:0051082">
    <property type="term" value="F:unfolded protein binding"/>
    <property type="evidence" value="ECO:0007669"/>
    <property type="project" value="UniProtKB-UniRule"/>
</dbReference>
<dbReference type="GO" id="GO:0008270">
    <property type="term" value="F:zinc ion binding"/>
    <property type="evidence" value="ECO:0007669"/>
    <property type="project" value="InterPro"/>
</dbReference>
<dbReference type="GO" id="GO:0051301">
    <property type="term" value="P:cell division"/>
    <property type="evidence" value="ECO:0000318"/>
    <property type="project" value="GO_Central"/>
</dbReference>
<dbReference type="GO" id="GO:0051603">
    <property type="term" value="P:proteolysis involved in protein catabolic process"/>
    <property type="evidence" value="ECO:0000318"/>
    <property type="project" value="GO_Central"/>
</dbReference>
<dbReference type="CDD" id="cd19497">
    <property type="entry name" value="RecA-like_ClpX"/>
    <property type="match status" value="1"/>
</dbReference>
<dbReference type="FunFam" id="1.10.8.60:FF:000002">
    <property type="entry name" value="ATP-dependent Clp protease ATP-binding subunit ClpX"/>
    <property type="match status" value="1"/>
</dbReference>
<dbReference type="FunFam" id="3.40.50.300:FF:000005">
    <property type="entry name" value="ATP-dependent Clp protease ATP-binding subunit ClpX"/>
    <property type="match status" value="1"/>
</dbReference>
<dbReference type="Gene3D" id="1.10.8.60">
    <property type="match status" value="1"/>
</dbReference>
<dbReference type="Gene3D" id="6.20.220.10">
    <property type="entry name" value="ClpX chaperone, C4-type zinc finger domain"/>
    <property type="match status" value="1"/>
</dbReference>
<dbReference type="Gene3D" id="3.40.50.300">
    <property type="entry name" value="P-loop containing nucleotide triphosphate hydrolases"/>
    <property type="match status" value="1"/>
</dbReference>
<dbReference type="HAMAP" id="MF_00175">
    <property type="entry name" value="ClpX"/>
    <property type="match status" value="1"/>
</dbReference>
<dbReference type="InterPro" id="IPR003593">
    <property type="entry name" value="AAA+_ATPase"/>
</dbReference>
<dbReference type="InterPro" id="IPR050052">
    <property type="entry name" value="ATP-dep_Clp_protease_ClpX"/>
</dbReference>
<dbReference type="InterPro" id="IPR003959">
    <property type="entry name" value="ATPase_AAA_core"/>
</dbReference>
<dbReference type="InterPro" id="IPR019489">
    <property type="entry name" value="Clp_ATPase_C"/>
</dbReference>
<dbReference type="InterPro" id="IPR004487">
    <property type="entry name" value="Clp_protease_ATP-bd_su_ClpX"/>
</dbReference>
<dbReference type="InterPro" id="IPR046425">
    <property type="entry name" value="ClpX_bact"/>
</dbReference>
<dbReference type="InterPro" id="IPR027417">
    <property type="entry name" value="P-loop_NTPase"/>
</dbReference>
<dbReference type="InterPro" id="IPR010603">
    <property type="entry name" value="Znf_CppX_C4"/>
</dbReference>
<dbReference type="InterPro" id="IPR038366">
    <property type="entry name" value="Znf_CppX_C4_sf"/>
</dbReference>
<dbReference type="NCBIfam" id="TIGR00382">
    <property type="entry name" value="clpX"/>
    <property type="match status" value="1"/>
</dbReference>
<dbReference type="NCBIfam" id="NF003745">
    <property type="entry name" value="PRK05342.1"/>
    <property type="match status" value="1"/>
</dbReference>
<dbReference type="PANTHER" id="PTHR48102:SF7">
    <property type="entry name" value="ATP-DEPENDENT CLP PROTEASE ATP-BINDING SUBUNIT CLPX-LIKE, MITOCHONDRIAL"/>
    <property type="match status" value="1"/>
</dbReference>
<dbReference type="PANTHER" id="PTHR48102">
    <property type="entry name" value="ATP-DEPENDENT CLP PROTEASE ATP-BINDING SUBUNIT CLPX-LIKE, MITOCHONDRIAL-RELATED"/>
    <property type="match status" value="1"/>
</dbReference>
<dbReference type="Pfam" id="PF07724">
    <property type="entry name" value="AAA_2"/>
    <property type="match status" value="1"/>
</dbReference>
<dbReference type="Pfam" id="PF10431">
    <property type="entry name" value="ClpB_D2-small"/>
    <property type="match status" value="1"/>
</dbReference>
<dbReference type="Pfam" id="PF06689">
    <property type="entry name" value="zf-C4_ClpX"/>
    <property type="match status" value="1"/>
</dbReference>
<dbReference type="SMART" id="SM00382">
    <property type="entry name" value="AAA"/>
    <property type="match status" value="1"/>
</dbReference>
<dbReference type="SMART" id="SM01086">
    <property type="entry name" value="ClpB_D2-small"/>
    <property type="match status" value="1"/>
</dbReference>
<dbReference type="SMART" id="SM00994">
    <property type="entry name" value="zf-C4_ClpX"/>
    <property type="match status" value="1"/>
</dbReference>
<dbReference type="SUPFAM" id="SSF57716">
    <property type="entry name" value="Glucocorticoid receptor-like (DNA-binding domain)"/>
    <property type="match status" value="1"/>
</dbReference>
<dbReference type="SUPFAM" id="SSF52540">
    <property type="entry name" value="P-loop containing nucleoside triphosphate hydrolases"/>
    <property type="match status" value="1"/>
</dbReference>
<dbReference type="PROSITE" id="PS51902">
    <property type="entry name" value="CLPX_ZB"/>
    <property type="match status" value="1"/>
</dbReference>
<keyword id="KW-0067">ATP-binding</keyword>
<keyword id="KW-0143">Chaperone</keyword>
<keyword id="KW-0479">Metal-binding</keyword>
<keyword id="KW-0547">Nucleotide-binding</keyword>
<keyword id="KW-1185">Reference proteome</keyword>
<keyword id="KW-0862">Zinc</keyword>
<accession>Q9KQS7</accession>
<sequence>MTDKSKEGGSSKLLYCSFCGKSQHEVRKLIAGPSVYICDECVDLCNDIIREEIKDVLPKKESAALPTPRKIREHLDDYVIGQEHAKKVLAVAVYNHYKRLRNGDTTSEGVELGKSNILLIGPTGSGKTLLAETLARLLDVPFTMADATTLTEAGYVGEDVENIIQKLLQKCDYDVAKAERGIVYIDEIDKISRKSENPSITRDVSGEGVQQALLKLIEGTVASVPPQGGRKHPQQEFLQVDTSKILFICGGAFAGLDKVIEQRVATGTGIGFGADVRSKDNSKTLSELFTQVEPEDLVKYGLIPEFIGRLPVTATLTELDEAALIQILCEPKNALTKQYAALFELENVDLEFREDALKAIAAKAMKRKTGARGLRSILEAVLLETMYELPSMEEVSKVVIDESVINGESAPLLIYSANESQAAGAE</sequence>
<feature type="chain" id="PRO_0000160451" description="ATP-dependent Clp protease ATP-binding subunit ClpX">
    <location>
        <begin position="1"/>
        <end position="426"/>
    </location>
</feature>
<feature type="domain" description="ClpX-type ZB" evidence="2">
    <location>
        <begin position="4"/>
        <end position="57"/>
    </location>
</feature>
<feature type="binding site" evidence="2">
    <location>
        <position position="16"/>
    </location>
    <ligand>
        <name>Zn(2+)</name>
        <dbReference type="ChEBI" id="CHEBI:29105"/>
    </ligand>
</feature>
<feature type="binding site" evidence="2">
    <location>
        <position position="19"/>
    </location>
    <ligand>
        <name>Zn(2+)</name>
        <dbReference type="ChEBI" id="CHEBI:29105"/>
    </ligand>
</feature>
<feature type="binding site" evidence="2">
    <location>
        <position position="38"/>
    </location>
    <ligand>
        <name>Zn(2+)</name>
        <dbReference type="ChEBI" id="CHEBI:29105"/>
    </ligand>
</feature>
<feature type="binding site" evidence="2">
    <location>
        <position position="41"/>
    </location>
    <ligand>
        <name>Zn(2+)</name>
        <dbReference type="ChEBI" id="CHEBI:29105"/>
    </ligand>
</feature>
<feature type="binding site" evidence="1">
    <location>
        <begin position="122"/>
        <end position="129"/>
    </location>
    <ligand>
        <name>ATP</name>
        <dbReference type="ChEBI" id="CHEBI:30616"/>
    </ligand>
</feature>
<proteinExistence type="inferred from homology"/>
<evidence type="ECO:0000255" key="1">
    <source>
        <dbReference type="HAMAP-Rule" id="MF_00175"/>
    </source>
</evidence>
<evidence type="ECO:0000255" key="2">
    <source>
        <dbReference type="PROSITE-ProRule" id="PRU01250"/>
    </source>
</evidence>
<comment type="function">
    <text evidence="1">ATP-dependent specificity component of the Clp protease. It directs the protease to specific substrates. Can perform chaperone functions in the absence of ClpP.</text>
</comment>
<comment type="subunit">
    <text evidence="1">Component of the ClpX-ClpP complex. Forms a hexameric ring that, in the presence of ATP, binds to fourteen ClpP subunits assembled into a disk-like structure with a central cavity, resembling the structure of eukaryotic proteasomes.</text>
</comment>
<comment type="similarity">
    <text evidence="1">Belongs to the ClpX chaperone family.</text>
</comment>
<name>CLPX_VIBCH</name>
<reference key="1">
    <citation type="journal article" date="2000" name="Nature">
        <title>DNA sequence of both chromosomes of the cholera pathogen Vibrio cholerae.</title>
        <authorList>
            <person name="Heidelberg J.F."/>
            <person name="Eisen J.A."/>
            <person name="Nelson W.C."/>
            <person name="Clayton R.A."/>
            <person name="Gwinn M.L."/>
            <person name="Dodson R.J."/>
            <person name="Haft D.H."/>
            <person name="Hickey E.K."/>
            <person name="Peterson J.D."/>
            <person name="Umayam L.A."/>
            <person name="Gill S.R."/>
            <person name="Nelson K.E."/>
            <person name="Read T.D."/>
            <person name="Tettelin H."/>
            <person name="Richardson D.L."/>
            <person name="Ermolaeva M.D."/>
            <person name="Vamathevan J.J."/>
            <person name="Bass S."/>
            <person name="Qin H."/>
            <person name="Dragoi I."/>
            <person name="Sellers P."/>
            <person name="McDonald L.A."/>
            <person name="Utterback T.R."/>
            <person name="Fleischmann R.D."/>
            <person name="Nierman W.C."/>
            <person name="White O."/>
            <person name="Salzberg S.L."/>
            <person name="Smith H.O."/>
            <person name="Colwell R.R."/>
            <person name="Mekalanos J.J."/>
            <person name="Venter J.C."/>
            <person name="Fraser C.M."/>
        </authorList>
    </citation>
    <scope>NUCLEOTIDE SEQUENCE [LARGE SCALE GENOMIC DNA]</scope>
    <source>
        <strain>ATCC 39315 / El Tor Inaba N16961</strain>
    </source>
</reference>
<organism>
    <name type="scientific">Vibrio cholerae serotype O1 (strain ATCC 39315 / El Tor Inaba N16961)</name>
    <dbReference type="NCBI Taxonomy" id="243277"/>
    <lineage>
        <taxon>Bacteria</taxon>
        <taxon>Pseudomonadati</taxon>
        <taxon>Pseudomonadota</taxon>
        <taxon>Gammaproteobacteria</taxon>
        <taxon>Vibrionales</taxon>
        <taxon>Vibrionaceae</taxon>
        <taxon>Vibrio</taxon>
    </lineage>
</organism>
<protein>
    <recommendedName>
        <fullName evidence="1">ATP-dependent Clp protease ATP-binding subunit ClpX</fullName>
    </recommendedName>
</protein>